<sequence>MAAVNLQASCSSGLASEDDANVGSQIGAAERLERPPRRQQQRNNYGSSNQDQPDAAILAVPNVVMREPCGSRPSRLTGGGGGSGGPPTNEMEEEQGLKYGAQHVIKLFVPVSLCMLVVVATINSISFYNSTDVYLLYTPFHEQSPEPSVKFWSALANSLILMSVVVVMTFLLIVLYKKRCYRIIHGWLILSSFMLLFIFTYLYLEELLRAYNIPMDYPTALLIMWNFGVVGMMSIHWQGPLRLQQGYLIFVAALMALVFIKYLPEWTAWAVLAAISIWDLIAVLSPRGPLRILVETAQERNEQIFPALIYSSTVVYALVNTVTPQQSQATASSSPSSSNSTTTTRATQNSLASPEAAAASGQRTGNSHPRQNQRDDGSVLATEGMPLVTFKSNLRGNAEAAGFTQEWSANLSERVARRQIEVQSTQSGNAQRSNEYRTVTAPDQNHPDGQEERGIKLGLGDFIFYSVLVGKASSYGDWTTTIACFVAILIGLCLTLLLLAIWRKALPALPISITFGLIFCFATSAVVKPFMEDLSAKQVFI</sequence>
<comment type="function">
    <text evidence="4 5 9">Probable catalytic subunit of the gamma-secretase complex, an endoprotease complex that catalyzes the intramembrane cleavage of integral membrane proteins such as Notch receptor. Required for S3 cleavage of Notch, which releases activated Notch protein from the cell membrane. Involved in the patterning of the optic lobes.</text>
</comment>
<comment type="subunit">
    <text evidence="1 8 9">Homodimer (By similarity). Component of the gamma-secretase complex, a complex composed of a presenilin (Psn) homodimer, nicastrin (Nct), Aph-1 and Pen-2. Interacts with Mettl2. Isoform 2 shows a better interaction with Mettl2 than isoform 1.</text>
</comment>
<comment type="subcellular location">
    <subcellularLocation>
        <location evidence="1">Endoplasmic reticulum membrane</location>
        <topology evidence="1">Multi-pass membrane protein</topology>
    </subcellularLocation>
    <subcellularLocation>
        <location evidence="1">Golgi apparatus membrane</location>
        <topology evidence="1">Multi-pass membrane protein</topology>
    </subcellularLocation>
</comment>
<comment type="alternative products">
    <event type="alternative splicing"/>
    <isoform>
        <id>O02194-1</id>
        <name>1</name>
        <name>A2</name>
        <name>A</name>
        <name>DLA-b</name>
        <sequence type="displayed"/>
    </isoform>
    <isoform>
        <id>O02194-2</id>
        <name>2</name>
        <name>A1</name>
        <name>B</name>
        <name>PS-d</name>
        <name>DLA-a</name>
        <sequence type="described" ref="VSP_005195"/>
    </isoform>
    <isoform>
        <id>O02194-3</id>
        <name>3</name>
        <sequence type="described" ref="VSP_007988"/>
    </isoform>
</comment>
<comment type="tissue specificity">
    <text evidence="6">Maternally expressed in nurse and follicle cells. In early embryos, expressed in all or most cells and later increases in CNS and epidermal tissues. In larvae, expression is seen in all imaginal disks, brain and optic lobes. In pupae, expression is seen in eye disk and brain.</text>
</comment>
<comment type="developmental stage">
    <text evidence="6 10 11 12">Expressed both maternally and zygotically throughout development.</text>
</comment>
<comment type="domain">
    <text evidence="1">The PAL motif is required for normal active site conformation.</text>
</comment>
<comment type="PTM">
    <text evidence="7">Cleaved. The cleavage, which probably takes place between the 6th and the 7th transmembrane regions, may be required for activation of the gamma-secretase activity.</text>
</comment>
<comment type="similarity">
    <text evidence="14">Belongs to the peptidase A22A family.</text>
</comment>
<protein>
    <recommendedName>
        <fullName>Presenilin homolog</fullName>
        <shortName>DmPS</shortName>
        <ecNumber>3.4.23.-</ecNumber>
    </recommendedName>
    <alternativeName>
        <fullName>dPS</fullName>
    </alternativeName>
</protein>
<organism>
    <name type="scientific">Drosophila melanogaster</name>
    <name type="common">Fruit fly</name>
    <dbReference type="NCBI Taxonomy" id="7227"/>
    <lineage>
        <taxon>Eukaryota</taxon>
        <taxon>Metazoa</taxon>
        <taxon>Ecdysozoa</taxon>
        <taxon>Arthropoda</taxon>
        <taxon>Hexapoda</taxon>
        <taxon>Insecta</taxon>
        <taxon>Pterygota</taxon>
        <taxon>Neoptera</taxon>
        <taxon>Endopterygota</taxon>
        <taxon>Diptera</taxon>
        <taxon>Brachycera</taxon>
        <taxon>Muscomorpha</taxon>
        <taxon>Ephydroidea</taxon>
        <taxon>Drosophilidae</taxon>
        <taxon>Drosophila</taxon>
        <taxon>Sophophora</taxon>
    </lineage>
</organism>
<evidence type="ECO:0000250" key="1"/>
<evidence type="ECO:0000255" key="2"/>
<evidence type="ECO:0000256" key="3">
    <source>
        <dbReference type="SAM" id="MobiDB-lite"/>
    </source>
</evidence>
<evidence type="ECO:0000269" key="4">
    <source>
    </source>
</evidence>
<evidence type="ECO:0000269" key="5">
    <source>
    </source>
</evidence>
<evidence type="ECO:0000269" key="6">
    <source>
    </source>
</evidence>
<evidence type="ECO:0000269" key="7">
    <source>
    </source>
</evidence>
<evidence type="ECO:0000269" key="8">
    <source>
    </source>
</evidence>
<evidence type="ECO:0000269" key="9">
    <source>
    </source>
</evidence>
<evidence type="ECO:0000269" key="10">
    <source>
    </source>
</evidence>
<evidence type="ECO:0000269" key="11">
    <source>
    </source>
</evidence>
<evidence type="ECO:0000269" key="12">
    <source>
    </source>
</evidence>
<evidence type="ECO:0000303" key="13">
    <source>
    </source>
</evidence>
<evidence type="ECO:0000305" key="14"/>
<feature type="chain" id="PRO_0000073901" description="Presenilin homolog">
    <location>
        <begin position="1"/>
        <end position="541"/>
    </location>
</feature>
<feature type="topological domain" description="Cytoplasmic" evidence="2">
    <location>
        <begin position="1"/>
        <end position="106"/>
    </location>
</feature>
<feature type="transmembrane region" description="Helical; Name=1" evidence="2">
    <location>
        <begin position="107"/>
        <end position="127"/>
    </location>
</feature>
<feature type="topological domain" description="Lumenal" evidence="2">
    <location>
        <begin position="128"/>
        <end position="154"/>
    </location>
</feature>
<feature type="transmembrane region" description="Helical; Name=2" evidence="2">
    <location>
        <begin position="155"/>
        <end position="175"/>
    </location>
</feature>
<feature type="topological domain" description="Cytoplasmic" evidence="2">
    <location>
        <begin position="176"/>
        <end position="182"/>
    </location>
</feature>
<feature type="transmembrane region" description="Helical; Name=3" evidence="2">
    <location>
        <begin position="183"/>
        <end position="203"/>
    </location>
</feature>
<feature type="topological domain" description="Lumenal" evidence="2">
    <location>
        <begin position="204"/>
        <end position="216"/>
    </location>
</feature>
<feature type="transmembrane region" description="Helical; Name=4" evidence="2">
    <location>
        <begin position="217"/>
        <end position="237"/>
    </location>
</feature>
<feature type="topological domain" description="Cytoplasmic" evidence="2">
    <location>
        <begin position="238"/>
        <end position="242"/>
    </location>
</feature>
<feature type="transmembrane region" description="Helical; Name=5" evidence="2">
    <location>
        <begin position="243"/>
        <end position="263"/>
    </location>
</feature>
<feature type="topological domain" description="Lumenal" evidence="2">
    <location>
        <begin position="264"/>
        <end position="265"/>
    </location>
</feature>
<feature type="transmembrane region" description="Helical; Name=6" evidence="2">
    <location>
        <begin position="266"/>
        <end position="286"/>
    </location>
</feature>
<feature type="topological domain" description="Cytoplasmic" evidence="2">
    <location>
        <begin position="287"/>
        <end position="453"/>
    </location>
</feature>
<feature type="transmembrane region" description="Helical; Name=7" evidence="2">
    <location>
        <begin position="454"/>
        <end position="474"/>
    </location>
</feature>
<feature type="topological domain" description="Lumenal" evidence="2">
    <location>
        <begin position="475"/>
        <end position="481"/>
    </location>
</feature>
<feature type="transmembrane region" description="Helical; Name=8" evidence="2">
    <location>
        <begin position="482"/>
        <end position="502"/>
    </location>
</feature>
<feature type="topological domain" description="Cytoplasmic" evidence="2">
    <location>
        <begin position="503"/>
        <end position="506"/>
    </location>
</feature>
<feature type="intramembrane region" description="Helical; Name=9" evidence="2">
    <location>
        <begin position="507"/>
        <end position="527"/>
    </location>
</feature>
<feature type="topological domain" description="Cytoplasmic" evidence="2">
    <location>
        <begin position="528"/>
        <end position="541"/>
    </location>
</feature>
<feature type="region of interest" description="Disordered" evidence="3">
    <location>
        <begin position="1"/>
        <end position="52"/>
    </location>
</feature>
<feature type="region of interest" description="Disordered" evidence="3">
    <location>
        <begin position="69"/>
        <end position="92"/>
    </location>
</feature>
<feature type="region of interest" description="Interaction with Mettl2">
    <location>
        <begin position="320"/>
        <end position="481"/>
    </location>
</feature>
<feature type="region of interest" description="Disordered" evidence="3">
    <location>
        <begin position="327"/>
        <end position="379"/>
    </location>
</feature>
<feature type="region of interest" description="Disordered" evidence="3">
    <location>
        <begin position="421"/>
        <end position="449"/>
    </location>
</feature>
<feature type="short sequence motif" description="PAL">
    <location>
        <begin position="507"/>
        <end position="509"/>
    </location>
</feature>
<feature type="compositionally biased region" description="Polar residues" evidence="3">
    <location>
        <begin position="1"/>
        <end position="14"/>
    </location>
</feature>
<feature type="compositionally biased region" description="Polar residues" evidence="3">
    <location>
        <begin position="43"/>
        <end position="52"/>
    </location>
</feature>
<feature type="compositionally biased region" description="Low complexity" evidence="3">
    <location>
        <begin position="327"/>
        <end position="350"/>
    </location>
</feature>
<feature type="compositionally biased region" description="Polar residues" evidence="3">
    <location>
        <begin position="361"/>
        <end position="370"/>
    </location>
</feature>
<feature type="compositionally biased region" description="Polar residues" evidence="3">
    <location>
        <begin position="421"/>
        <end position="443"/>
    </location>
</feature>
<feature type="active site" evidence="1">
    <location>
        <position position="279"/>
    </location>
</feature>
<feature type="active site" evidence="1">
    <location>
        <position position="461"/>
    </location>
</feature>
<feature type="glycosylation site" description="N-linked (GlcNAc...) asparagine" evidence="2">
    <location>
        <position position="129"/>
    </location>
</feature>
<feature type="splice variant" id="VSP_007988" description="In isoform 3." evidence="14">
    <location>
        <begin position="365"/>
        <end position="397"/>
    </location>
</feature>
<feature type="splice variant" id="VSP_005195" description="In isoform 2." evidence="13">
    <location>
        <begin position="384"/>
        <end position="397"/>
    </location>
</feature>
<feature type="sequence conflict" description="In Ref. 2; AAB53369." evidence="14" ref="2">
    <original>GG</original>
    <variation>RS</variation>
    <location>
        <begin position="80"/>
        <end position="81"/>
    </location>
</feature>
<accession>O02194</accession>
<accession>O02395</accession>
<accession>O76802</accession>
<accession>O96340</accession>
<accession>Q9TY80</accession>
<accession>Q9V3L9</accession>
<accession>Q9V3S1</accession>
<proteinExistence type="evidence at protein level"/>
<keyword id="KW-0025">Alternative splicing</keyword>
<keyword id="KW-0256">Endoplasmic reticulum</keyword>
<keyword id="KW-0325">Glycoprotein</keyword>
<keyword id="KW-0333">Golgi apparatus</keyword>
<keyword id="KW-0378">Hydrolase</keyword>
<keyword id="KW-0472">Membrane</keyword>
<keyword id="KW-0914">Notch signaling pathway</keyword>
<keyword id="KW-0645">Protease</keyword>
<keyword id="KW-1185">Reference proteome</keyword>
<keyword id="KW-0812">Transmembrane</keyword>
<keyword id="KW-1133">Transmembrane helix</keyword>
<reference key="1">
    <citation type="journal article" date="1997" name="NeuroReport">
        <title>Cloning and characterization of the Drosophila presenilin homologue.</title>
        <authorList>
            <person name="Boulianne G.L."/>
            <person name="Livne-Bar I."/>
            <person name="Humphreys J.M."/>
            <person name="Liang Y."/>
            <person name="Lin C."/>
            <person name="Rogaev E."/>
            <person name="St George-Hyslop P.H."/>
        </authorList>
    </citation>
    <scope>NUCLEOTIDE SEQUENCE [MRNA]</scope>
    <scope>ALTERNATIVE SPLICING</scope>
    <scope>DEVELOPMENTAL STAGE</scope>
    <source>
        <tissue>Embryo</tissue>
    </source>
</reference>
<reference key="2">
    <citation type="journal article" date="1997" name="NeuroReport">
        <title>Isolation and characterization of Drosophila presenilin homolog.</title>
        <authorList>
            <person name="Hong C.-S."/>
            <person name="Koo E.H."/>
        </authorList>
    </citation>
    <scope>NUCLEOTIDE SEQUENCE [MRNA] (ISOFORM 2)</scope>
    <scope>DEVELOPMENTAL STAGE</scope>
    <source>
        <strain>Canton-S</strain>
        <tissue>Embryo</tissue>
        <tissue>Head</tissue>
    </source>
</reference>
<reference key="3">
    <citation type="journal article" date="1998" name="Mech. Dev.">
        <title>Characterization of Drosophila Presenilin and its colocalization with Notch during development.</title>
        <authorList>
            <person name="Ye Y."/>
            <person name="Fortini M.E."/>
        </authorList>
    </citation>
    <scope>NUCLEOTIDE SEQUENCE [GENOMIC DNA] (ISOFORMS 1 AND 2)</scope>
    <scope>TISSUE SPECIFICITY</scope>
    <scope>DEVELOPMENTAL STAGE</scope>
    <scope>SUBCELLULAR LOCATION</scope>
    <scope>ALTERNATIVE SPLICING</scope>
</reference>
<reference key="4">
    <citation type="journal article" date="1999" name="Nature">
        <title>Neurogenic phenotypes and altered Notch processing in Drosophila Presenilin mutants.</title>
        <authorList>
            <person name="Ye Y."/>
            <person name="Lukinova N."/>
            <person name="Fortini M.E."/>
        </authorList>
    </citation>
    <scope>NUCLEOTIDE SEQUENCE (ISOFORMS 1 AND 2)</scope>
    <scope>FUNCTION IN S3 CLEAVAGE OF NOTCH</scope>
</reference>
<reference key="5">
    <citation type="journal article" date="1998" name="J. Neurogenet.">
        <title>Identification of a Drosophila presenilin homologue: evidence of alternatively spliced forms.</title>
        <authorList>
            <person name="Marfany G."/>
            <person name="Del-Favero J."/>
            <person name="Valero R."/>
            <person name="De Jonghe C."/>
            <person name="Woodrow S."/>
            <person name="Hendriks L."/>
            <person name="Van Broeckhoven C."/>
            <person name="Gonzalez-Duarte R."/>
        </authorList>
    </citation>
    <scope>NUCLEOTIDE SEQUENCE [GENOMIC DNA / MRNA]</scope>
    <scope>ALTERNATIVE SPLICING</scope>
    <scope>DEVELOPMENTAL STAGE</scope>
    <source>
        <strain>Canton-S</strain>
    </source>
</reference>
<reference key="6">
    <citation type="journal article" date="1999" name="J. Neurosci.">
        <title>Drosophila presenilin is required for neuronal differentiation and affects notch subcellular localization and signaling.</title>
        <authorList>
            <person name="Guo Y."/>
            <person name="Livne-Bar I."/>
            <person name="Zhou L."/>
            <person name="Boulianne G.L."/>
        </authorList>
    </citation>
    <scope>NUCLEOTIDE SEQUENCE [GENOMIC DNA] (ISOFORMS 1 AND 2)</scope>
</reference>
<reference key="7">
    <citation type="journal article" date="2000" name="Science">
        <title>The genome sequence of Drosophila melanogaster.</title>
        <authorList>
            <person name="Adams M.D."/>
            <person name="Celniker S.E."/>
            <person name="Holt R.A."/>
            <person name="Evans C.A."/>
            <person name="Gocayne J.D."/>
            <person name="Amanatides P.G."/>
            <person name="Scherer S.E."/>
            <person name="Li P.W."/>
            <person name="Hoskins R.A."/>
            <person name="Galle R.F."/>
            <person name="George R.A."/>
            <person name="Lewis S.E."/>
            <person name="Richards S."/>
            <person name="Ashburner M."/>
            <person name="Henderson S.N."/>
            <person name="Sutton G.G."/>
            <person name="Wortman J.R."/>
            <person name="Yandell M.D."/>
            <person name="Zhang Q."/>
            <person name="Chen L.X."/>
            <person name="Brandon R.C."/>
            <person name="Rogers Y.-H.C."/>
            <person name="Blazej R.G."/>
            <person name="Champe M."/>
            <person name="Pfeiffer B.D."/>
            <person name="Wan K.H."/>
            <person name="Doyle C."/>
            <person name="Baxter E.G."/>
            <person name="Helt G."/>
            <person name="Nelson C.R."/>
            <person name="Miklos G.L.G."/>
            <person name="Abril J.F."/>
            <person name="Agbayani A."/>
            <person name="An H.-J."/>
            <person name="Andrews-Pfannkoch C."/>
            <person name="Baldwin D."/>
            <person name="Ballew R.M."/>
            <person name="Basu A."/>
            <person name="Baxendale J."/>
            <person name="Bayraktaroglu L."/>
            <person name="Beasley E.M."/>
            <person name="Beeson K.Y."/>
            <person name="Benos P.V."/>
            <person name="Berman B.P."/>
            <person name="Bhandari D."/>
            <person name="Bolshakov S."/>
            <person name="Borkova D."/>
            <person name="Botchan M.R."/>
            <person name="Bouck J."/>
            <person name="Brokstein P."/>
            <person name="Brottier P."/>
            <person name="Burtis K.C."/>
            <person name="Busam D.A."/>
            <person name="Butler H."/>
            <person name="Cadieu E."/>
            <person name="Center A."/>
            <person name="Chandra I."/>
            <person name="Cherry J.M."/>
            <person name="Cawley S."/>
            <person name="Dahlke C."/>
            <person name="Davenport L.B."/>
            <person name="Davies P."/>
            <person name="de Pablos B."/>
            <person name="Delcher A."/>
            <person name="Deng Z."/>
            <person name="Mays A.D."/>
            <person name="Dew I."/>
            <person name="Dietz S.M."/>
            <person name="Dodson K."/>
            <person name="Doup L.E."/>
            <person name="Downes M."/>
            <person name="Dugan-Rocha S."/>
            <person name="Dunkov B.C."/>
            <person name="Dunn P."/>
            <person name="Durbin K.J."/>
            <person name="Evangelista C.C."/>
            <person name="Ferraz C."/>
            <person name="Ferriera S."/>
            <person name="Fleischmann W."/>
            <person name="Fosler C."/>
            <person name="Gabrielian A.E."/>
            <person name="Garg N.S."/>
            <person name="Gelbart W.M."/>
            <person name="Glasser K."/>
            <person name="Glodek A."/>
            <person name="Gong F."/>
            <person name="Gorrell J.H."/>
            <person name="Gu Z."/>
            <person name="Guan P."/>
            <person name="Harris M."/>
            <person name="Harris N.L."/>
            <person name="Harvey D.A."/>
            <person name="Heiman T.J."/>
            <person name="Hernandez J.R."/>
            <person name="Houck J."/>
            <person name="Hostin D."/>
            <person name="Houston K.A."/>
            <person name="Howland T.J."/>
            <person name="Wei M.-H."/>
            <person name="Ibegwam C."/>
            <person name="Jalali M."/>
            <person name="Kalush F."/>
            <person name="Karpen G.H."/>
            <person name="Ke Z."/>
            <person name="Kennison J.A."/>
            <person name="Ketchum K.A."/>
            <person name="Kimmel B.E."/>
            <person name="Kodira C.D."/>
            <person name="Kraft C.L."/>
            <person name="Kravitz S."/>
            <person name="Kulp D."/>
            <person name="Lai Z."/>
            <person name="Lasko P."/>
            <person name="Lei Y."/>
            <person name="Levitsky A.A."/>
            <person name="Li J.H."/>
            <person name="Li Z."/>
            <person name="Liang Y."/>
            <person name="Lin X."/>
            <person name="Liu X."/>
            <person name="Mattei B."/>
            <person name="McIntosh T.C."/>
            <person name="McLeod M.P."/>
            <person name="McPherson D."/>
            <person name="Merkulov G."/>
            <person name="Milshina N.V."/>
            <person name="Mobarry C."/>
            <person name="Morris J."/>
            <person name="Moshrefi A."/>
            <person name="Mount S.M."/>
            <person name="Moy M."/>
            <person name="Murphy B."/>
            <person name="Murphy L."/>
            <person name="Muzny D.M."/>
            <person name="Nelson D.L."/>
            <person name="Nelson D.R."/>
            <person name="Nelson K.A."/>
            <person name="Nixon K."/>
            <person name="Nusskern D.R."/>
            <person name="Pacleb J.M."/>
            <person name="Palazzolo M."/>
            <person name="Pittman G.S."/>
            <person name="Pan S."/>
            <person name="Pollard J."/>
            <person name="Puri V."/>
            <person name="Reese M.G."/>
            <person name="Reinert K."/>
            <person name="Remington K."/>
            <person name="Saunders R.D.C."/>
            <person name="Scheeler F."/>
            <person name="Shen H."/>
            <person name="Shue B.C."/>
            <person name="Siden-Kiamos I."/>
            <person name="Simpson M."/>
            <person name="Skupski M.P."/>
            <person name="Smith T.J."/>
            <person name="Spier E."/>
            <person name="Spradling A.C."/>
            <person name="Stapleton M."/>
            <person name="Strong R."/>
            <person name="Sun E."/>
            <person name="Svirskas R."/>
            <person name="Tector C."/>
            <person name="Turner R."/>
            <person name="Venter E."/>
            <person name="Wang A.H."/>
            <person name="Wang X."/>
            <person name="Wang Z.-Y."/>
            <person name="Wassarman D.A."/>
            <person name="Weinstock G.M."/>
            <person name="Weissenbach J."/>
            <person name="Williams S.M."/>
            <person name="Woodage T."/>
            <person name="Worley K.C."/>
            <person name="Wu D."/>
            <person name="Yang S."/>
            <person name="Yao Q.A."/>
            <person name="Ye J."/>
            <person name="Yeh R.-F."/>
            <person name="Zaveri J.S."/>
            <person name="Zhan M."/>
            <person name="Zhang G."/>
            <person name="Zhao Q."/>
            <person name="Zheng L."/>
            <person name="Zheng X.H."/>
            <person name="Zhong F.N."/>
            <person name="Zhong W."/>
            <person name="Zhou X."/>
            <person name="Zhu S.C."/>
            <person name="Zhu X."/>
            <person name="Smith H.O."/>
            <person name="Gibbs R.A."/>
            <person name="Myers E.W."/>
            <person name="Rubin G.M."/>
            <person name="Venter J.C."/>
        </authorList>
    </citation>
    <scope>NUCLEOTIDE SEQUENCE [LARGE SCALE GENOMIC DNA]</scope>
    <source>
        <strain>Berkeley</strain>
    </source>
</reference>
<reference key="8">
    <citation type="journal article" date="2002" name="Genome Biol.">
        <title>Annotation of the Drosophila melanogaster euchromatic genome: a systematic review.</title>
        <authorList>
            <person name="Misra S."/>
            <person name="Crosby M.A."/>
            <person name="Mungall C.J."/>
            <person name="Matthews B.B."/>
            <person name="Campbell K.S."/>
            <person name="Hradecky P."/>
            <person name="Huang Y."/>
            <person name="Kaminker J.S."/>
            <person name="Millburn G.H."/>
            <person name="Prochnik S.E."/>
            <person name="Smith C.D."/>
            <person name="Tupy J.L."/>
            <person name="Whitfield E.J."/>
            <person name="Bayraktaroglu L."/>
            <person name="Berman B.P."/>
            <person name="Bettencourt B.R."/>
            <person name="Celniker S.E."/>
            <person name="de Grey A.D.N.J."/>
            <person name="Drysdale R.A."/>
            <person name="Harris N.L."/>
            <person name="Richter J."/>
            <person name="Russo S."/>
            <person name="Schroeder A.J."/>
            <person name="Shu S.Q."/>
            <person name="Stapleton M."/>
            <person name="Yamada C."/>
            <person name="Ashburner M."/>
            <person name="Gelbart W.M."/>
            <person name="Rubin G.M."/>
            <person name="Lewis S.E."/>
        </authorList>
    </citation>
    <scope>GENOME REANNOTATION</scope>
    <scope>ALTERNATIVE SPLICING</scope>
    <source>
        <strain>Berkeley</strain>
    </source>
</reference>
<reference key="9">
    <citation type="journal article" date="2002" name="Genome Biol.">
        <title>A Drosophila full-length cDNA resource.</title>
        <authorList>
            <person name="Stapleton M."/>
            <person name="Carlson J.W."/>
            <person name="Brokstein P."/>
            <person name="Yu C."/>
            <person name="Champe M."/>
            <person name="George R.A."/>
            <person name="Guarin H."/>
            <person name="Kronmiller B."/>
            <person name="Pacleb J.M."/>
            <person name="Park S."/>
            <person name="Wan K.H."/>
            <person name="Rubin G.M."/>
            <person name="Celniker S.E."/>
        </authorList>
    </citation>
    <scope>NUCLEOTIDE SEQUENCE [LARGE SCALE MRNA] (ISOFORM 1)</scope>
    <source>
        <strain>Berkeley</strain>
        <tissue>Embryo</tissue>
    </source>
</reference>
<reference key="10">
    <citation type="journal article" date="2000" name="Mol. Cell. Neurosci.">
        <title>Posttranslational modification and plasma membrane localization of the Drosophila melanogaster presenilin.</title>
        <authorList>
            <person name="Nowotny P."/>
            <person name="Gorski S.M."/>
            <person name="Han S.W."/>
            <person name="Philips K."/>
            <person name="Ray W.J."/>
            <person name="Nowotny V."/>
            <person name="Jones C.J."/>
            <person name="Clark R.F."/>
            <person name="Cagan R.L."/>
            <person name="Goate A.M."/>
        </authorList>
    </citation>
    <scope>ALTERNATIVE SPLICING (ISOFORM 3)</scope>
    <scope>CLEAVAGE</scope>
</reference>
<reference key="11">
    <citation type="journal article" date="1999" name="Nature">
        <title>Presenilin is required for activity and nuclear access of Notch in Drosophila.</title>
        <authorList>
            <person name="Struhl G."/>
            <person name="Greenwald I."/>
        </authorList>
    </citation>
    <scope>FUNCTION IN S3 CLEAVAGE OF NOTCH</scope>
</reference>
<reference key="12">
    <citation type="journal article" date="2001" name="Gene">
        <title>Identification of a novel family of putative methyltransferases that interact with human and Drosophila presenilins.</title>
        <authorList>
            <person name="Zhang S.X."/>
            <person name="Guo Y."/>
            <person name="Boulianne G.L."/>
        </authorList>
    </citation>
    <scope>INTERACTION WITH METTL2</scope>
</reference>
<reference key="13">
    <citation type="journal article" date="2003" name="Nature">
        <title>The role of presenilin cofactors in the gamma-secretase complex.</title>
        <authorList>
            <person name="Takasugi N."/>
            <person name="Tomita T."/>
            <person name="Hayashi I."/>
            <person name="Tsuruoka M."/>
            <person name="Niimura M."/>
            <person name="Takahashi Y."/>
            <person name="Thinakaran G."/>
            <person name="Iwatsubo T."/>
        </authorList>
    </citation>
    <scope>FUNCTION IN THE GAMMA-SECRETASE COMPLEX</scope>
    <scope>INTERACTION WITH PEN-2; APH-1 AND NCT</scope>
</reference>
<gene>
    <name type="primary">Psn</name>
    <name type="synonym">PS</name>
    <name type="ORF">CG18803</name>
</gene>
<dbReference type="EC" id="3.4.23.-"/>
<dbReference type="EMBL" id="U77934">
    <property type="protein sequence ID" value="AAB61139.1"/>
    <property type="molecule type" value="mRNA"/>
</dbReference>
<dbReference type="EMBL" id="U78084">
    <property type="protein sequence ID" value="AAB53369.1"/>
    <property type="molecule type" value="mRNA"/>
</dbReference>
<dbReference type="EMBL" id="AF084184">
    <property type="protein sequence ID" value="AAC33129.1"/>
    <property type="molecule type" value="Genomic_DNA"/>
</dbReference>
<dbReference type="EMBL" id="AF084184">
    <property type="protein sequence ID" value="AAC33128.1"/>
    <property type="molecule type" value="Genomic_DNA"/>
</dbReference>
<dbReference type="EMBL" id="AF017024">
    <property type="protein sequence ID" value="AAD01610.1"/>
    <property type="molecule type" value="mRNA"/>
</dbReference>
<dbReference type="EMBL" id="AF017025">
    <property type="protein sequence ID" value="AAD01611.1"/>
    <property type="molecule type" value="mRNA"/>
</dbReference>
<dbReference type="EMBL" id="AF017026">
    <property type="protein sequence ID" value="AAD01612.1"/>
    <property type="molecule type" value="Genomic_DNA"/>
</dbReference>
<dbReference type="EMBL" id="AF093402">
    <property type="protein sequence ID" value="AAD52707.1"/>
    <property type="molecule type" value="Genomic_DNA"/>
</dbReference>
<dbReference type="EMBL" id="AF093402">
    <property type="protein sequence ID" value="AAD52708.1"/>
    <property type="molecule type" value="Genomic_DNA"/>
</dbReference>
<dbReference type="EMBL" id="AE014296">
    <property type="protein sequence ID" value="AAN12132.1"/>
    <property type="molecule type" value="Genomic_DNA"/>
</dbReference>
<dbReference type="EMBL" id="AE014296">
    <property type="protein sequence ID" value="AAF51598.1"/>
    <property type="molecule type" value="Genomic_DNA"/>
</dbReference>
<dbReference type="EMBL" id="AY061316">
    <property type="protein sequence ID" value="AAL28864.1"/>
    <property type="molecule type" value="mRNA"/>
</dbReference>
<dbReference type="RefSeq" id="NP_001137988.1">
    <molecule id="O02194-3"/>
    <property type="nucleotide sequence ID" value="NM_001144516.2"/>
</dbReference>
<dbReference type="RefSeq" id="NP_001262110.1">
    <molecule id="O02194-2"/>
    <property type="nucleotide sequence ID" value="NM_001275181.1"/>
</dbReference>
<dbReference type="RefSeq" id="NP_001262111.1">
    <molecule id="O02194-1"/>
    <property type="nucleotide sequence ID" value="NM_001275182.1"/>
</dbReference>
<dbReference type="RefSeq" id="NP_524184.1">
    <molecule id="O02194-1"/>
    <property type="nucleotide sequence ID" value="NM_079460.2"/>
</dbReference>
<dbReference type="RefSeq" id="NP_730535.1">
    <molecule id="O02194-2"/>
    <property type="nucleotide sequence ID" value="NM_168856.3"/>
</dbReference>
<dbReference type="SMR" id="O02194"/>
<dbReference type="BioGRID" id="65518">
    <property type="interactions" value="44"/>
</dbReference>
<dbReference type="ComplexPortal" id="CPX-2673">
    <property type="entry name" value="Gamma-secretase complex"/>
</dbReference>
<dbReference type="DIP" id="DIP-1139N"/>
<dbReference type="FunCoup" id="O02194">
    <property type="interactions" value="1255"/>
</dbReference>
<dbReference type="IntAct" id="O02194">
    <property type="interactions" value="1"/>
</dbReference>
<dbReference type="STRING" id="7227.FBpp0077850"/>
<dbReference type="MEROPS" id="A22.014"/>
<dbReference type="GlyCosmos" id="O02194">
    <property type="glycosylation" value="1 site, No reported glycans"/>
</dbReference>
<dbReference type="GlyGen" id="O02194">
    <property type="glycosylation" value="1 site"/>
</dbReference>
<dbReference type="PaxDb" id="7227-FBpp0077850"/>
<dbReference type="DNASU" id="40260"/>
<dbReference type="EnsemblMetazoa" id="FBtr0078192">
    <molecule id="O02194-1"/>
    <property type="protein sequence ID" value="FBpp0077850"/>
    <property type="gene ID" value="FBgn0284421"/>
</dbReference>
<dbReference type="EnsemblMetazoa" id="FBtr0078193">
    <molecule id="O02194-2"/>
    <property type="protein sequence ID" value="FBpp0077851"/>
    <property type="gene ID" value="FBgn0284421"/>
</dbReference>
<dbReference type="EnsemblMetazoa" id="FBtr0114517">
    <molecule id="O02194-3"/>
    <property type="protein sequence ID" value="FBpp0113009"/>
    <property type="gene ID" value="FBgn0284421"/>
</dbReference>
<dbReference type="EnsemblMetazoa" id="FBtr0333478">
    <molecule id="O02194-2"/>
    <property type="protein sequence ID" value="FBpp0305665"/>
    <property type="gene ID" value="FBgn0284421"/>
</dbReference>
<dbReference type="EnsemblMetazoa" id="FBtr0333479">
    <molecule id="O02194-1"/>
    <property type="protein sequence ID" value="FBpp0305666"/>
    <property type="gene ID" value="FBgn0284421"/>
</dbReference>
<dbReference type="GeneID" id="40260"/>
<dbReference type="KEGG" id="dme:Dmel_CG18803"/>
<dbReference type="UCSC" id="CG18803-RA">
    <molecule id="O02194-1"/>
    <property type="organism name" value="d. melanogaster"/>
</dbReference>
<dbReference type="AGR" id="FB:FBgn0284421"/>
<dbReference type="CTD" id="40260"/>
<dbReference type="FlyBase" id="FBgn0284421">
    <property type="gene designation" value="Psn"/>
</dbReference>
<dbReference type="VEuPathDB" id="VectorBase:FBgn0284421"/>
<dbReference type="eggNOG" id="KOG2736">
    <property type="taxonomic scope" value="Eukaryota"/>
</dbReference>
<dbReference type="GeneTree" id="ENSGT00940000174002"/>
<dbReference type="InParanoid" id="O02194"/>
<dbReference type="OMA" id="TTNLMMF"/>
<dbReference type="OrthoDB" id="20287at2759"/>
<dbReference type="PhylomeDB" id="O02194"/>
<dbReference type="Reactome" id="R-DME-1251985">
    <property type="pathway name" value="Nuclear signaling by ERBB4"/>
</dbReference>
<dbReference type="Reactome" id="R-DME-3928665">
    <property type="pathway name" value="EPH-ephrin mediated repulsion of cells"/>
</dbReference>
<dbReference type="SignaLink" id="O02194"/>
<dbReference type="BioGRID-ORCS" id="40260">
    <property type="hits" value="0 hits in 3 CRISPR screens"/>
</dbReference>
<dbReference type="GenomeRNAi" id="40260"/>
<dbReference type="PRO" id="PR:O02194"/>
<dbReference type="Proteomes" id="UP000000803">
    <property type="component" value="Chromosome 3L"/>
</dbReference>
<dbReference type="Bgee" id="FBgn0284421">
    <property type="expression patterns" value="Expressed in eye disc (Drosophila) and 150 other cell types or tissues"/>
</dbReference>
<dbReference type="ExpressionAtlas" id="O02194">
    <property type="expression patterns" value="baseline and differential"/>
</dbReference>
<dbReference type="GO" id="GO:0005789">
    <property type="term" value="C:endoplasmic reticulum membrane"/>
    <property type="evidence" value="ECO:0007669"/>
    <property type="project" value="UniProtKB-SubCell"/>
</dbReference>
<dbReference type="GO" id="GO:0070765">
    <property type="term" value="C:gamma-secretase complex"/>
    <property type="evidence" value="ECO:0000314"/>
    <property type="project" value="UniProtKB"/>
</dbReference>
<dbReference type="GO" id="GO:0000139">
    <property type="term" value="C:Golgi membrane"/>
    <property type="evidence" value="ECO:0007669"/>
    <property type="project" value="UniProtKB-SubCell"/>
</dbReference>
<dbReference type="GO" id="GO:0042500">
    <property type="term" value="F:aspartic endopeptidase activity, intramembrane cleaving"/>
    <property type="evidence" value="ECO:0000314"/>
    <property type="project" value="FlyBase"/>
</dbReference>
<dbReference type="GO" id="GO:0004175">
    <property type="term" value="F:endopeptidase activity"/>
    <property type="evidence" value="ECO:0000314"/>
    <property type="project" value="FlyBase"/>
</dbReference>
<dbReference type="GO" id="GO:0034205">
    <property type="term" value="P:amyloid-beta formation"/>
    <property type="evidence" value="ECO:0000314"/>
    <property type="project" value="FlyBase"/>
</dbReference>
<dbReference type="GO" id="GO:0006915">
    <property type="term" value="P:apoptotic process"/>
    <property type="evidence" value="ECO:0000315"/>
    <property type="project" value="CACAO"/>
</dbReference>
<dbReference type="GO" id="GO:0055074">
    <property type="term" value="P:calcium ion homeostasis"/>
    <property type="evidence" value="ECO:0000318"/>
    <property type="project" value="GO_Central"/>
</dbReference>
<dbReference type="GO" id="GO:0006509">
    <property type="term" value="P:membrane protein ectodomain proteolysis"/>
    <property type="evidence" value="ECO:0000314"/>
    <property type="project" value="FlyBase"/>
</dbReference>
<dbReference type="GO" id="GO:0007220">
    <property type="term" value="P:Notch receptor processing"/>
    <property type="evidence" value="ECO:0000315"/>
    <property type="project" value="FlyBase"/>
</dbReference>
<dbReference type="GO" id="GO:0035333">
    <property type="term" value="P:Notch receptor processing, ligand-dependent"/>
    <property type="evidence" value="ECO:0000314"/>
    <property type="project" value="FlyBase"/>
</dbReference>
<dbReference type="GO" id="GO:0007219">
    <property type="term" value="P:Notch signaling pathway"/>
    <property type="evidence" value="ECO:0000314"/>
    <property type="project" value="FlyBase"/>
</dbReference>
<dbReference type="GO" id="GO:0016485">
    <property type="term" value="P:protein processing"/>
    <property type="evidence" value="ECO:0000318"/>
    <property type="project" value="GO_Central"/>
</dbReference>
<dbReference type="GO" id="GO:0006508">
    <property type="term" value="P:proteolysis"/>
    <property type="evidence" value="ECO:0000314"/>
    <property type="project" value="FlyBase"/>
</dbReference>
<dbReference type="FunFam" id="1.10.472.100:FF:000001">
    <property type="entry name" value="Presenilin"/>
    <property type="match status" value="1"/>
</dbReference>
<dbReference type="Gene3D" id="1.10.472.100">
    <property type="entry name" value="Presenilin"/>
    <property type="match status" value="1"/>
</dbReference>
<dbReference type="InterPro" id="IPR001108">
    <property type="entry name" value="Peptidase_A22A"/>
</dbReference>
<dbReference type="InterPro" id="IPR006639">
    <property type="entry name" value="Preselin/SPP"/>
</dbReference>
<dbReference type="InterPro" id="IPR042524">
    <property type="entry name" value="Presenilin_C"/>
</dbReference>
<dbReference type="PANTHER" id="PTHR10202">
    <property type="entry name" value="PRESENILIN"/>
    <property type="match status" value="1"/>
</dbReference>
<dbReference type="PANTHER" id="PTHR10202:SF13">
    <property type="entry name" value="PRESENILIN HOMOLOG"/>
    <property type="match status" value="1"/>
</dbReference>
<dbReference type="Pfam" id="PF01080">
    <property type="entry name" value="Presenilin"/>
    <property type="match status" value="1"/>
</dbReference>
<dbReference type="PRINTS" id="PR01072">
    <property type="entry name" value="PRESENILIN"/>
</dbReference>
<dbReference type="SMART" id="SM00730">
    <property type="entry name" value="PSN"/>
    <property type="match status" value="1"/>
</dbReference>
<name>PSN_DROME</name>